<reference key="1">
    <citation type="journal article" date="2011" name="J. Bacteriol.">
        <title>Genome of Ochrobactrum anthropi ATCC 49188 T, a versatile opportunistic pathogen and symbiont of several eukaryotic hosts.</title>
        <authorList>
            <person name="Chain P.S."/>
            <person name="Lang D.M."/>
            <person name="Comerci D.J."/>
            <person name="Malfatti S.A."/>
            <person name="Vergez L.M."/>
            <person name="Shin M."/>
            <person name="Ugalde R.A."/>
            <person name="Garcia E."/>
            <person name="Tolmasky M.E."/>
        </authorList>
    </citation>
    <scope>NUCLEOTIDE SEQUENCE [LARGE SCALE GENOMIC DNA]</scope>
    <source>
        <strain>ATCC 49188 / DSM 6882 / CCUG 24695 / JCM 21032 / LMG 3331 / NBRC 15819 / NCTC 12168 / Alc 37</strain>
    </source>
</reference>
<sequence length="170" mass="19306">MFRATAIIRADKVIDAVPAGHAVLERDERHLRRKAIVLEGGEKVLVDFAEPIVLEHGDRLVLDDGREIEIRAASEELYEIRGRDPLHIAELTWHIGNRHLAAQIESDRIFILRDHVIKAMLEGLGATVTDVTAIFSPLRGAYSGGHSHDDHDHHHGHHEHDHEHHHHHHD</sequence>
<protein>
    <recommendedName>
        <fullName evidence="1">Urease accessory protein UreE</fullName>
    </recommendedName>
</protein>
<comment type="function">
    <text evidence="1">Involved in urease metallocenter assembly. Binds nickel. Probably functions as a nickel donor during metallocenter assembly.</text>
</comment>
<comment type="subcellular location">
    <subcellularLocation>
        <location evidence="1">Cytoplasm</location>
    </subcellularLocation>
</comment>
<comment type="similarity">
    <text evidence="1">Belongs to the UreE family.</text>
</comment>
<keyword id="KW-0143">Chaperone</keyword>
<keyword id="KW-0963">Cytoplasm</keyword>
<keyword id="KW-0533">Nickel</keyword>
<keyword id="KW-1185">Reference proteome</keyword>
<feature type="chain" id="PRO_1000197443" description="Urease accessory protein UreE">
    <location>
        <begin position="1"/>
        <end position="170"/>
    </location>
</feature>
<feature type="region of interest" description="Disordered" evidence="2">
    <location>
        <begin position="144"/>
        <end position="170"/>
    </location>
</feature>
<feature type="compositionally biased region" description="Basic and acidic residues" evidence="2">
    <location>
        <begin position="146"/>
        <end position="162"/>
    </location>
</feature>
<name>UREE_BRUA4</name>
<proteinExistence type="inferred from homology"/>
<evidence type="ECO:0000255" key="1">
    <source>
        <dbReference type="HAMAP-Rule" id="MF_00822"/>
    </source>
</evidence>
<evidence type="ECO:0000256" key="2">
    <source>
        <dbReference type="SAM" id="MobiDB-lite"/>
    </source>
</evidence>
<organism>
    <name type="scientific">Brucella anthropi (strain ATCC 49188 / DSM 6882 / CCUG 24695 / JCM 21032 / LMG 3331 / NBRC 15819 / NCTC 12168 / Alc 37)</name>
    <name type="common">Ochrobactrum anthropi</name>
    <dbReference type="NCBI Taxonomy" id="439375"/>
    <lineage>
        <taxon>Bacteria</taxon>
        <taxon>Pseudomonadati</taxon>
        <taxon>Pseudomonadota</taxon>
        <taxon>Alphaproteobacteria</taxon>
        <taxon>Hyphomicrobiales</taxon>
        <taxon>Brucellaceae</taxon>
        <taxon>Brucella/Ochrobactrum group</taxon>
        <taxon>Brucella</taxon>
    </lineage>
</organism>
<accession>A6WVR3</accession>
<gene>
    <name evidence="1" type="primary">ureE</name>
    <name type="ordered locus">Oant_0336</name>
</gene>
<dbReference type="EMBL" id="CP000758">
    <property type="protein sequence ID" value="ABS13067.1"/>
    <property type="molecule type" value="Genomic_DNA"/>
</dbReference>
<dbReference type="RefSeq" id="WP_011982506.1">
    <property type="nucleotide sequence ID" value="NC_009667.1"/>
</dbReference>
<dbReference type="SMR" id="A6WVR3"/>
<dbReference type="STRING" id="439375.Oant_0336"/>
<dbReference type="KEGG" id="oan:Oant_0336"/>
<dbReference type="PATRIC" id="fig|439375.7.peg.358"/>
<dbReference type="eggNOG" id="COG2371">
    <property type="taxonomic scope" value="Bacteria"/>
</dbReference>
<dbReference type="HOGENOM" id="CLU_093757_1_0_5"/>
<dbReference type="PhylomeDB" id="A6WVR3"/>
<dbReference type="Proteomes" id="UP000002301">
    <property type="component" value="Chromosome 1"/>
</dbReference>
<dbReference type="GO" id="GO:0005737">
    <property type="term" value="C:cytoplasm"/>
    <property type="evidence" value="ECO:0007669"/>
    <property type="project" value="UniProtKB-SubCell"/>
</dbReference>
<dbReference type="GO" id="GO:0016151">
    <property type="term" value="F:nickel cation binding"/>
    <property type="evidence" value="ECO:0007669"/>
    <property type="project" value="UniProtKB-UniRule"/>
</dbReference>
<dbReference type="GO" id="GO:0051082">
    <property type="term" value="F:unfolded protein binding"/>
    <property type="evidence" value="ECO:0007669"/>
    <property type="project" value="UniProtKB-UniRule"/>
</dbReference>
<dbReference type="GO" id="GO:0006457">
    <property type="term" value="P:protein folding"/>
    <property type="evidence" value="ECO:0007669"/>
    <property type="project" value="InterPro"/>
</dbReference>
<dbReference type="GO" id="GO:0065003">
    <property type="term" value="P:protein-containing complex assembly"/>
    <property type="evidence" value="ECO:0007669"/>
    <property type="project" value="InterPro"/>
</dbReference>
<dbReference type="GO" id="GO:0019627">
    <property type="term" value="P:urea metabolic process"/>
    <property type="evidence" value="ECO:0007669"/>
    <property type="project" value="InterPro"/>
</dbReference>
<dbReference type="CDD" id="cd00571">
    <property type="entry name" value="UreE"/>
    <property type="match status" value="1"/>
</dbReference>
<dbReference type="Gene3D" id="2.60.260.20">
    <property type="entry name" value="Urease metallochaperone UreE, N-terminal domain"/>
    <property type="match status" value="1"/>
</dbReference>
<dbReference type="Gene3D" id="3.30.70.790">
    <property type="entry name" value="UreE, C-terminal domain"/>
    <property type="match status" value="1"/>
</dbReference>
<dbReference type="HAMAP" id="MF_00822">
    <property type="entry name" value="UreE"/>
    <property type="match status" value="1"/>
</dbReference>
<dbReference type="InterPro" id="IPR012406">
    <property type="entry name" value="UreE"/>
</dbReference>
<dbReference type="InterPro" id="IPR007864">
    <property type="entry name" value="UreE_C_dom"/>
</dbReference>
<dbReference type="InterPro" id="IPR004029">
    <property type="entry name" value="UreE_N"/>
</dbReference>
<dbReference type="InterPro" id="IPR036118">
    <property type="entry name" value="UreE_N_sf"/>
</dbReference>
<dbReference type="NCBIfam" id="NF009760">
    <property type="entry name" value="PRK13261.2-6"/>
    <property type="match status" value="1"/>
</dbReference>
<dbReference type="Pfam" id="PF05194">
    <property type="entry name" value="UreE_C"/>
    <property type="match status" value="1"/>
</dbReference>
<dbReference type="Pfam" id="PF02814">
    <property type="entry name" value="UreE_N"/>
    <property type="match status" value="1"/>
</dbReference>
<dbReference type="PIRSF" id="PIRSF036402">
    <property type="entry name" value="Ureas_acces_UreE"/>
    <property type="match status" value="1"/>
</dbReference>
<dbReference type="SMART" id="SM00988">
    <property type="entry name" value="UreE_N"/>
    <property type="match status" value="1"/>
</dbReference>
<dbReference type="SUPFAM" id="SSF69737">
    <property type="entry name" value="Urease metallochaperone UreE, C-terminal domain"/>
    <property type="match status" value="1"/>
</dbReference>
<dbReference type="SUPFAM" id="SSF69287">
    <property type="entry name" value="Urease metallochaperone UreE, N-terminal domain"/>
    <property type="match status" value="1"/>
</dbReference>